<keyword id="KW-0325">Glycoprotein</keyword>
<keyword id="KW-0472">Membrane</keyword>
<keyword id="KW-0597">Phosphoprotein</keyword>
<keyword id="KW-1185">Reference proteome</keyword>
<keyword id="KW-0812">Transmembrane</keyword>
<keyword id="KW-1133">Transmembrane helix</keyword>
<organism>
    <name type="scientific">Felis catus</name>
    <name type="common">Cat</name>
    <name type="synonym">Felis silvestris catus</name>
    <dbReference type="NCBI Taxonomy" id="9685"/>
    <lineage>
        <taxon>Eukaryota</taxon>
        <taxon>Metazoa</taxon>
        <taxon>Chordata</taxon>
        <taxon>Craniata</taxon>
        <taxon>Vertebrata</taxon>
        <taxon>Euteleostomi</taxon>
        <taxon>Mammalia</taxon>
        <taxon>Eutheria</taxon>
        <taxon>Laurasiatheria</taxon>
        <taxon>Carnivora</taxon>
        <taxon>Feliformia</taxon>
        <taxon>Felidae</taxon>
        <taxon>Felinae</taxon>
        <taxon>Felis</taxon>
    </lineage>
</organism>
<proteinExistence type="inferred from homology"/>
<name>ST7_FELCA</name>
<gene>
    <name type="primary">ST7</name>
</gene>
<accession>A0M8T1</accession>
<protein>
    <recommendedName>
        <fullName>Suppressor of tumorigenicity 7 protein</fullName>
    </recommendedName>
</protein>
<sequence>MAEAGTGFLEQLKSCIVWSWTYLWTVWFFIVLFLVYILRVPLKINDNLSTVSMFLNTLTPKFYVALTGTSSLISGLILIFEWWYFRKYGTSFIEQVSVSHLRPLLGGVDNNSSNNSNSSNGDSDSNRQSVSECKVWRNPLNLFRGAEYNRYTWVTGREPLTYYDMNLSAQDHQTFFTCDSDHLRPADAIMQKAWRERNPQARISAAHEALEINEIRSRVEVPLIASSTIWEIKLLPKCATAYILLAEEEATTIAEAEKLFKQALKAGDGCYRRSQQLQHHGSQYEAQHRRDTNVLVYIKRRLAMCARRLGRTREAVKMMRDLMKEFPLLSMFNIHENLLEALLELQAYADVQAVLAKYDDISLPKSATICYTAALLKARAVSDKFSPEAASRRGLSTAEMNAVEAIHRAVEFNPHVPKYLLEMKSLILPPEHILKRGDSEAIAYAFFHLAHWKRVEGALNLLHCTWEGTFRMIPYPLEKGHLFYPYPICTETADRELLPSFHEVSVYPKKELPFFILFTAGLCSFTAMLALLTHQFPELMGVFAKAMIDIFCSAEFRDWNCKSIFMRVEDELEIPPAPQSQHFQN</sequence>
<dbReference type="EMBL" id="DP000234">
    <property type="protein sequence ID" value="AAR16234.1"/>
    <property type="molecule type" value="Genomic_DNA"/>
</dbReference>
<dbReference type="RefSeq" id="XP_006929367.1">
    <property type="nucleotide sequence ID" value="XM_006929305.5"/>
</dbReference>
<dbReference type="STRING" id="9685.ENSFCAP00000029119"/>
<dbReference type="GlyCosmos" id="A0M8T1">
    <property type="glycosylation" value="1 site, No reported glycans"/>
</dbReference>
<dbReference type="PaxDb" id="9685-ENSFCAP00000012291"/>
<dbReference type="Ensembl" id="ENSFCAT00000036027.3">
    <property type="protein sequence ID" value="ENSFCAP00000029119.2"/>
    <property type="gene ID" value="ENSFCAG00000013253.6"/>
</dbReference>
<dbReference type="GeneID" id="493671"/>
<dbReference type="CTD" id="7982"/>
<dbReference type="VGNC" id="VGNC:65734">
    <property type="gene designation" value="ST7"/>
</dbReference>
<dbReference type="eggNOG" id="KOG3807">
    <property type="taxonomic scope" value="Eukaryota"/>
</dbReference>
<dbReference type="GeneTree" id="ENSGT00390000000873"/>
<dbReference type="InParanoid" id="A0M8T1"/>
<dbReference type="OMA" id="DRCATAY"/>
<dbReference type="OrthoDB" id="5914722at2759"/>
<dbReference type="Proteomes" id="UP000011712">
    <property type="component" value="Chromosome A2"/>
</dbReference>
<dbReference type="Bgee" id="ENSFCAG00000013253">
    <property type="expression patterns" value="Expressed in embryo and 11 other cell types or tissues"/>
</dbReference>
<dbReference type="GO" id="GO:0016020">
    <property type="term" value="C:membrane"/>
    <property type="evidence" value="ECO:0007669"/>
    <property type="project" value="UniProtKB-SubCell"/>
</dbReference>
<dbReference type="CDD" id="cd11557">
    <property type="entry name" value="ST7"/>
    <property type="match status" value="1"/>
</dbReference>
<dbReference type="InterPro" id="IPR007311">
    <property type="entry name" value="ST7"/>
</dbReference>
<dbReference type="PANTHER" id="PTHR12745">
    <property type="entry name" value="SUPPRESSION OF TUMORIGENICITY 7"/>
    <property type="match status" value="1"/>
</dbReference>
<dbReference type="PANTHER" id="PTHR12745:SF10">
    <property type="entry name" value="SUPPRESSOR OF TUMORIGENICITY 7 PROTEIN"/>
    <property type="match status" value="1"/>
</dbReference>
<dbReference type="Pfam" id="PF04184">
    <property type="entry name" value="ST7"/>
    <property type="match status" value="1"/>
</dbReference>
<feature type="chain" id="PRO_0000339199" description="Suppressor of tumorigenicity 7 protein">
    <location>
        <begin position="1"/>
        <end position="585"/>
    </location>
</feature>
<feature type="transmembrane region" description="Helical" evidence="2">
    <location>
        <begin position="15"/>
        <end position="35"/>
    </location>
</feature>
<feature type="transmembrane region" description="Helical" evidence="2">
    <location>
        <begin position="62"/>
        <end position="82"/>
    </location>
</feature>
<feature type="transmembrane region" description="Helical" evidence="2">
    <location>
        <begin position="512"/>
        <end position="532"/>
    </location>
</feature>
<feature type="modified residue" description="Phosphoserine" evidence="1">
    <location>
        <position position="386"/>
    </location>
</feature>
<feature type="glycosylation site" description="N-linked (GlcNAc...) asparagine" evidence="2">
    <location>
        <position position="47"/>
    </location>
</feature>
<evidence type="ECO:0000250" key="1">
    <source>
        <dbReference type="UniProtKB" id="Q9NRC1"/>
    </source>
</evidence>
<evidence type="ECO:0000255" key="2"/>
<evidence type="ECO:0000305" key="3"/>
<comment type="subcellular location">
    <subcellularLocation>
        <location evidence="3">Membrane</location>
        <topology evidence="3">Multi-pass membrane protein</topology>
    </subcellularLocation>
</comment>
<comment type="similarity">
    <text evidence="3">Belongs to the ST7 family.</text>
</comment>
<reference key="1">
    <citation type="journal article" date="2003" name="Nature">
        <title>Comparative analyses of multi-species sequences from targeted genomic regions.</title>
        <authorList>
            <person name="Thomas J.W."/>
            <person name="Touchman J.W."/>
            <person name="Blakesley R.W."/>
            <person name="Bouffard G.G."/>
            <person name="Beckstrom-Sternberg S.M."/>
            <person name="Margulies E.H."/>
            <person name="Blanchette M."/>
            <person name="Siepel A.C."/>
            <person name="Thomas P.J."/>
            <person name="McDowell J.C."/>
            <person name="Maskeri B."/>
            <person name="Hansen N.F."/>
            <person name="Schwartz M.S."/>
            <person name="Weber R.J."/>
            <person name="Kent W.J."/>
            <person name="Karolchik D."/>
            <person name="Bruen T.C."/>
            <person name="Bevan R."/>
            <person name="Cutler D.J."/>
            <person name="Schwartz S."/>
            <person name="Elnitski L."/>
            <person name="Idol J.R."/>
            <person name="Prasad A.B."/>
            <person name="Lee-Lin S.-Q."/>
            <person name="Maduro V.V.B."/>
            <person name="Summers T.J."/>
            <person name="Portnoy M.E."/>
            <person name="Dietrich N.L."/>
            <person name="Akhter N."/>
            <person name="Ayele K."/>
            <person name="Benjamin B."/>
            <person name="Cariaga K."/>
            <person name="Brinkley C.P."/>
            <person name="Brooks S.Y."/>
            <person name="Granite S."/>
            <person name="Guan X."/>
            <person name="Gupta J."/>
            <person name="Haghighi P."/>
            <person name="Ho S.-L."/>
            <person name="Huang M.C."/>
            <person name="Karlins E."/>
            <person name="Laric P.L."/>
            <person name="Legaspi R."/>
            <person name="Lim M.J."/>
            <person name="Maduro Q.L."/>
            <person name="Masiello C.A."/>
            <person name="Mastrian S.D."/>
            <person name="McCloskey J.C."/>
            <person name="Pearson R."/>
            <person name="Stantripop S."/>
            <person name="Tiongson E.E."/>
            <person name="Tran J.T."/>
            <person name="Tsurgeon C."/>
            <person name="Vogt J.L."/>
            <person name="Walker M.A."/>
            <person name="Wetherby K.D."/>
            <person name="Wiggins L.S."/>
            <person name="Young A.C."/>
            <person name="Zhang L.-H."/>
            <person name="Osoegawa K."/>
            <person name="Zhu B."/>
            <person name="Zhao B."/>
            <person name="Shu C.L."/>
            <person name="De Jong P.J."/>
            <person name="Lawrence C.E."/>
            <person name="Smit A.F."/>
            <person name="Chakravarti A."/>
            <person name="Haussler D."/>
            <person name="Green P."/>
            <person name="Miller W."/>
            <person name="Green E.D."/>
        </authorList>
    </citation>
    <scope>NUCLEOTIDE SEQUENCE [LARGE SCALE GENOMIC DNA]</scope>
</reference>